<accession>O83544</accession>
<comment type="function">
    <text>Produces ATP from ADP in the presence of a proton gradient across the membrane.</text>
</comment>
<comment type="subcellular location">
    <subcellularLocation>
        <location evidence="3">Cell membrane</location>
        <topology evidence="3">Multi-pass membrane protein</topology>
    </subcellularLocation>
</comment>
<comment type="similarity">
    <text evidence="3">Belongs to the V-ATPase 116 kDa subunit family.</text>
</comment>
<evidence type="ECO:0000255" key="1"/>
<evidence type="ECO:0000256" key="2">
    <source>
        <dbReference type="SAM" id="MobiDB-lite"/>
    </source>
</evidence>
<evidence type="ECO:0000305" key="3"/>
<protein>
    <recommendedName>
        <fullName>V-type ATP synthase subunit I 2</fullName>
    </recommendedName>
    <alternativeName>
        <fullName>V-ATPase subunit I 2</fullName>
    </alternativeName>
</protein>
<reference key="1">
    <citation type="journal article" date="1998" name="Science">
        <title>Complete genome sequence of Treponema pallidum, the syphilis spirochete.</title>
        <authorList>
            <person name="Fraser C.M."/>
            <person name="Norris S.J."/>
            <person name="Weinstock G.M."/>
            <person name="White O."/>
            <person name="Sutton G.G."/>
            <person name="Dodson R.J."/>
            <person name="Gwinn M.L."/>
            <person name="Hickey E.K."/>
            <person name="Clayton R.A."/>
            <person name="Ketchum K.A."/>
            <person name="Sodergren E."/>
            <person name="Hardham J.M."/>
            <person name="McLeod M.P."/>
            <person name="Salzberg S.L."/>
            <person name="Peterson J.D."/>
            <person name="Khalak H.G."/>
            <person name="Richardson D.L."/>
            <person name="Howell J.K."/>
            <person name="Chidambaram M."/>
            <person name="Utterback T.R."/>
            <person name="McDonald L.A."/>
            <person name="Artiach P."/>
            <person name="Bowman C."/>
            <person name="Cotton M.D."/>
            <person name="Fujii C."/>
            <person name="Garland S.A."/>
            <person name="Hatch B."/>
            <person name="Horst K."/>
            <person name="Roberts K.M."/>
            <person name="Sandusky M."/>
            <person name="Weidman J.F."/>
            <person name="Smith H.O."/>
            <person name="Venter J.C."/>
        </authorList>
    </citation>
    <scope>NUCLEOTIDE SEQUENCE [LARGE SCALE GENOMIC DNA]</scope>
    <source>
        <strain>Nichols</strain>
    </source>
</reference>
<proteinExistence type="inferred from homology"/>
<name>VATI2_TREPA</name>
<sequence>MFRSQRMKFLELVVLERDVDRVLEYLGKTALVHLRLSAAARGSSSHCAQSKEYVGRLEEACKYLGVSGECAFSPGDSLPTEEDYTLAQQILAEVDALHAREREGDAPSVPRGKSSVAHDSANEEQFQGEKCALGSMRGPALCALLRRFALQERVHRTRDALESTRHTYRIAGWLPAHEAKDLVAGLDNVTTGRMAVRLFEPQELSFIRDGSEHVPVCYQHGRFVRSYERMVSSYGCPPYGLVDPTPFVAFSYALLFGIMFGDLGQGLLFFVLGLLLRTRRVRALNRWAHLDYVFLSVGFSSMVMGFLTGEFFAHGTLLAPLIRSVTALCGGVPRDHILHLMPSHGSLHTLMAFFGFTLFLGFVINSLGLIINIVNQVRLRHALQQCVQKRECADSSFFGTWLPLQCAYHFLEFHSGSLMRLQWACLSWVFFVKSFWSVCASVCVRGFLKVLACI</sequence>
<keyword id="KW-1003">Cell membrane</keyword>
<keyword id="KW-0375">Hydrogen ion transport</keyword>
<keyword id="KW-0406">Ion transport</keyword>
<keyword id="KW-0472">Membrane</keyword>
<keyword id="KW-1185">Reference proteome</keyword>
<keyword id="KW-0812">Transmembrane</keyword>
<keyword id="KW-1133">Transmembrane helix</keyword>
<keyword id="KW-0813">Transport</keyword>
<feature type="chain" id="PRO_0000119243" description="V-type ATP synthase subunit I 2">
    <location>
        <begin position="1"/>
        <end position="454"/>
    </location>
</feature>
<feature type="transmembrane region" description="Helical" evidence="1">
    <location>
        <begin position="254"/>
        <end position="274"/>
    </location>
</feature>
<feature type="transmembrane region" description="Helical" evidence="1">
    <location>
        <begin position="293"/>
        <end position="313"/>
    </location>
</feature>
<feature type="transmembrane region" description="Helical" evidence="1">
    <location>
        <begin position="351"/>
        <end position="371"/>
    </location>
</feature>
<feature type="transmembrane region" description="Helical" evidence="1">
    <location>
        <begin position="424"/>
        <end position="444"/>
    </location>
</feature>
<feature type="region of interest" description="Disordered" evidence="2">
    <location>
        <begin position="101"/>
        <end position="121"/>
    </location>
</feature>
<gene>
    <name type="primary">atpI2</name>
    <name type="ordered locus">TP_0533</name>
</gene>
<organism>
    <name type="scientific">Treponema pallidum (strain Nichols)</name>
    <dbReference type="NCBI Taxonomy" id="243276"/>
    <lineage>
        <taxon>Bacteria</taxon>
        <taxon>Pseudomonadati</taxon>
        <taxon>Spirochaetota</taxon>
        <taxon>Spirochaetia</taxon>
        <taxon>Spirochaetales</taxon>
        <taxon>Treponemataceae</taxon>
        <taxon>Treponema</taxon>
    </lineage>
</organism>
<dbReference type="EMBL" id="AE000520">
    <property type="protein sequence ID" value="AAC65519.1"/>
    <property type="molecule type" value="Genomic_DNA"/>
</dbReference>
<dbReference type="PIR" id="F71313">
    <property type="entry name" value="F71313"/>
</dbReference>
<dbReference type="RefSeq" id="WP_010881980.1">
    <property type="nucleotide sequence ID" value="NC_000919.1"/>
</dbReference>
<dbReference type="SMR" id="O83544"/>
<dbReference type="IntAct" id="O83544">
    <property type="interactions" value="3"/>
</dbReference>
<dbReference type="STRING" id="243276.TP_0533"/>
<dbReference type="EnsemblBacteria" id="AAC65519">
    <property type="protein sequence ID" value="AAC65519"/>
    <property type="gene ID" value="TP_0533"/>
</dbReference>
<dbReference type="KEGG" id="tpa:TP_0533"/>
<dbReference type="eggNOG" id="COG1269">
    <property type="taxonomic scope" value="Bacteria"/>
</dbReference>
<dbReference type="HOGENOM" id="CLU_602593_0_0_12"/>
<dbReference type="Proteomes" id="UP000000811">
    <property type="component" value="Chromosome"/>
</dbReference>
<dbReference type="GO" id="GO:0005886">
    <property type="term" value="C:plasma membrane"/>
    <property type="evidence" value="ECO:0007669"/>
    <property type="project" value="UniProtKB-SubCell"/>
</dbReference>
<dbReference type="GO" id="GO:0033179">
    <property type="term" value="C:proton-transporting V-type ATPase, V0 domain"/>
    <property type="evidence" value="ECO:0007669"/>
    <property type="project" value="InterPro"/>
</dbReference>
<dbReference type="GO" id="GO:0016471">
    <property type="term" value="C:vacuolar proton-transporting V-type ATPase complex"/>
    <property type="evidence" value="ECO:0007669"/>
    <property type="project" value="TreeGrafter"/>
</dbReference>
<dbReference type="GO" id="GO:0051117">
    <property type="term" value="F:ATPase binding"/>
    <property type="evidence" value="ECO:0007669"/>
    <property type="project" value="TreeGrafter"/>
</dbReference>
<dbReference type="GO" id="GO:0046961">
    <property type="term" value="F:proton-transporting ATPase activity, rotational mechanism"/>
    <property type="evidence" value="ECO:0007669"/>
    <property type="project" value="InterPro"/>
</dbReference>
<dbReference type="GO" id="GO:0007035">
    <property type="term" value="P:vacuolar acidification"/>
    <property type="evidence" value="ECO:0007669"/>
    <property type="project" value="TreeGrafter"/>
</dbReference>
<dbReference type="InterPro" id="IPR002490">
    <property type="entry name" value="V-ATPase_116kDa_su"/>
</dbReference>
<dbReference type="PANTHER" id="PTHR11629:SF63">
    <property type="entry name" value="V-TYPE PROTON ATPASE SUBUNIT A"/>
    <property type="match status" value="1"/>
</dbReference>
<dbReference type="PANTHER" id="PTHR11629">
    <property type="entry name" value="VACUOLAR PROTON ATPASES"/>
    <property type="match status" value="1"/>
</dbReference>
<dbReference type="Pfam" id="PF01496">
    <property type="entry name" value="V_ATPase_I"/>
    <property type="match status" value="1"/>
</dbReference>